<sequence>MPFWVEVRINNLDEGDISALENNFTQNFNNLIDQNKEIIKYIIQKVKTQSYLEGKLHPFYYINLIDTNDLHKPCFLTKFGLKSRFTREEKGYIVIEGHYH</sequence>
<proteinExistence type="predicted"/>
<name>VPA2_ARV</name>
<organismHost>
    <name type="scientific">Bos taurus</name>
    <name type="common">Bovine</name>
    <dbReference type="NCBI Taxonomy" id="9913"/>
</organismHost>
<organismHost>
    <name type="scientific">Bubalus bubalis</name>
    <name type="common">Domestic water buffalo</name>
    <dbReference type="NCBI Taxonomy" id="89462"/>
</organismHost>
<organismHost>
    <name type="scientific">Culicoides</name>
    <dbReference type="NCBI Taxonomy" id="58271"/>
</organismHost>
<organismHost>
    <name type="scientific">Syncerus caffer</name>
    <name type="common">African buffalo</name>
    <dbReference type="NCBI Taxonomy" id="9970"/>
</organismHost>
<protein>
    <recommendedName>
        <fullName>Protein alpha-2</fullName>
    </recommendedName>
</protein>
<organism>
    <name type="scientific">Adelaide River virus</name>
    <name type="common">ARV</name>
    <dbReference type="NCBI Taxonomy" id="31612"/>
    <lineage>
        <taxon>Viruses</taxon>
        <taxon>Riboviria</taxon>
        <taxon>Orthornavirae</taxon>
        <taxon>Negarnaviricota</taxon>
        <taxon>Haploviricotina</taxon>
        <taxon>Monjiviricetes</taxon>
        <taxon>Mononegavirales</taxon>
        <taxon>Rhabdoviridae</taxon>
        <taxon>Alpharhabdovirinae</taxon>
        <taxon>Ephemerovirus</taxon>
        <taxon>Ephemerovirus adelaide</taxon>
    </lineage>
</organism>
<feature type="chain" id="PRO_0000299221" description="Protein alpha-2">
    <location>
        <begin position="1"/>
        <end position="100"/>
    </location>
</feature>
<accession>Q65108</accession>
<dbReference type="EMBL" id="U05987">
    <property type="protein sequence ID" value="AAA50192.1"/>
    <property type="molecule type" value="Genomic_RNA"/>
</dbReference>
<dbReference type="RefSeq" id="YP_009177245.1">
    <property type="nucleotide sequence ID" value="NC_028246.1"/>
</dbReference>
<dbReference type="SMR" id="Q65108"/>
<dbReference type="GeneID" id="26123214"/>
<reference key="1">
    <citation type="journal article" date="1994" name="Virology">
        <title>Complex genome organization in the GNS-L intergenic region of Adelaide River rhabdovirus.</title>
        <authorList>
            <person name="Wang Y."/>
            <person name="McWilliam S.M."/>
            <person name="Cowley J.A."/>
            <person name="Walker P.J."/>
        </authorList>
    </citation>
    <scope>NUCLEOTIDE SEQUENCE [GENOMIC RNA]</scope>
    <source>
        <strain>DPP61</strain>
    </source>
</reference>